<evidence type="ECO:0000255" key="1">
    <source>
        <dbReference type="HAMAP-Rule" id="MF_00337"/>
    </source>
</evidence>
<gene>
    <name evidence="1" type="primary">xseB</name>
    <name type="ordered locus">ECS88_0417</name>
</gene>
<dbReference type="EC" id="3.1.11.6" evidence="1"/>
<dbReference type="EMBL" id="CU928161">
    <property type="protein sequence ID" value="CAR01765.1"/>
    <property type="molecule type" value="Genomic_DNA"/>
</dbReference>
<dbReference type="RefSeq" id="WP_001124935.1">
    <property type="nucleotide sequence ID" value="NC_011742.1"/>
</dbReference>
<dbReference type="SMR" id="B7MD80"/>
<dbReference type="GeneID" id="75202844"/>
<dbReference type="KEGG" id="ecz:ECS88_0417"/>
<dbReference type="HOGENOM" id="CLU_145918_3_3_6"/>
<dbReference type="Proteomes" id="UP000000747">
    <property type="component" value="Chromosome"/>
</dbReference>
<dbReference type="GO" id="GO:0005829">
    <property type="term" value="C:cytosol"/>
    <property type="evidence" value="ECO:0007669"/>
    <property type="project" value="TreeGrafter"/>
</dbReference>
<dbReference type="GO" id="GO:0009318">
    <property type="term" value="C:exodeoxyribonuclease VII complex"/>
    <property type="evidence" value="ECO:0007669"/>
    <property type="project" value="InterPro"/>
</dbReference>
<dbReference type="GO" id="GO:0008855">
    <property type="term" value="F:exodeoxyribonuclease VII activity"/>
    <property type="evidence" value="ECO:0007669"/>
    <property type="project" value="UniProtKB-UniRule"/>
</dbReference>
<dbReference type="GO" id="GO:0006308">
    <property type="term" value="P:DNA catabolic process"/>
    <property type="evidence" value="ECO:0007669"/>
    <property type="project" value="UniProtKB-UniRule"/>
</dbReference>
<dbReference type="FunFam" id="1.10.287.1040:FF:000001">
    <property type="entry name" value="Exodeoxyribonuclease 7 small subunit"/>
    <property type="match status" value="1"/>
</dbReference>
<dbReference type="Gene3D" id="1.10.287.1040">
    <property type="entry name" value="Exonuclease VII, small subunit"/>
    <property type="match status" value="1"/>
</dbReference>
<dbReference type="HAMAP" id="MF_00337">
    <property type="entry name" value="Exonuc_7_S"/>
    <property type="match status" value="1"/>
</dbReference>
<dbReference type="InterPro" id="IPR003761">
    <property type="entry name" value="Exonuc_VII_S"/>
</dbReference>
<dbReference type="InterPro" id="IPR037004">
    <property type="entry name" value="Exonuc_VII_ssu_sf"/>
</dbReference>
<dbReference type="NCBIfam" id="NF002137">
    <property type="entry name" value="PRK00977.1-1"/>
    <property type="match status" value="1"/>
</dbReference>
<dbReference type="NCBIfam" id="NF002140">
    <property type="entry name" value="PRK00977.1-4"/>
    <property type="match status" value="1"/>
</dbReference>
<dbReference type="NCBIfam" id="TIGR01280">
    <property type="entry name" value="xseB"/>
    <property type="match status" value="1"/>
</dbReference>
<dbReference type="PANTHER" id="PTHR34137">
    <property type="entry name" value="EXODEOXYRIBONUCLEASE 7 SMALL SUBUNIT"/>
    <property type="match status" value="1"/>
</dbReference>
<dbReference type="PANTHER" id="PTHR34137:SF1">
    <property type="entry name" value="EXODEOXYRIBONUCLEASE 7 SMALL SUBUNIT"/>
    <property type="match status" value="1"/>
</dbReference>
<dbReference type="Pfam" id="PF02609">
    <property type="entry name" value="Exonuc_VII_S"/>
    <property type="match status" value="1"/>
</dbReference>
<dbReference type="PIRSF" id="PIRSF006488">
    <property type="entry name" value="Exonuc_VII_S"/>
    <property type="match status" value="1"/>
</dbReference>
<dbReference type="SUPFAM" id="SSF116842">
    <property type="entry name" value="XseB-like"/>
    <property type="match status" value="1"/>
</dbReference>
<keyword id="KW-0963">Cytoplasm</keyword>
<keyword id="KW-0269">Exonuclease</keyword>
<keyword id="KW-0378">Hydrolase</keyword>
<keyword id="KW-0540">Nuclease</keyword>
<keyword id="KW-1185">Reference proteome</keyword>
<sequence length="80" mass="8952">MPKKNEAPASFEKALSELEQIVTRLESGDLPLEEALNEFERGVQLARQGQAKLQQAEQRVQILLSDNEDASLTPFTPDNE</sequence>
<reference key="1">
    <citation type="journal article" date="2009" name="PLoS Genet.">
        <title>Organised genome dynamics in the Escherichia coli species results in highly diverse adaptive paths.</title>
        <authorList>
            <person name="Touchon M."/>
            <person name="Hoede C."/>
            <person name="Tenaillon O."/>
            <person name="Barbe V."/>
            <person name="Baeriswyl S."/>
            <person name="Bidet P."/>
            <person name="Bingen E."/>
            <person name="Bonacorsi S."/>
            <person name="Bouchier C."/>
            <person name="Bouvet O."/>
            <person name="Calteau A."/>
            <person name="Chiapello H."/>
            <person name="Clermont O."/>
            <person name="Cruveiller S."/>
            <person name="Danchin A."/>
            <person name="Diard M."/>
            <person name="Dossat C."/>
            <person name="Karoui M.E."/>
            <person name="Frapy E."/>
            <person name="Garry L."/>
            <person name="Ghigo J.M."/>
            <person name="Gilles A.M."/>
            <person name="Johnson J."/>
            <person name="Le Bouguenec C."/>
            <person name="Lescat M."/>
            <person name="Mangenot S."/>
            <person name="Martinez-Jehanne V."/>
            <person name="Matic I."/>
            <person name="Nassif X."/>
            <person name="Oztas S."/>
            <person name="Petit M.A."/>
            <person name="Pichon C."/>
            <person name="Rouy Z."/>
            <person name="Ruf C.S."/>
            <person name="Schneider D."/>
            <person name="Tourret J."/>
            <person name="Vacherie B."/>
            <person name="Vallenet D."/>
            <person name="Medigue C."/>
            <person name="Rocha E.P.C."/>
            <person name="Denamur E."/>
        </authorList>
    </citation>
    <scope>NUCLEOTIDE SEQUENCE [LARGE SCALE GENOMIC DNA]</scope>
    <source>
        <strain>S88 / ExPEC</strain>
    </source>
</reference>
<feature type="chain" id="PRO_1000119919" description="Exodeoxyribonuclease 7 small subunit">
    <location>
        <begin position="1"/>
        <end position="80"/>
    </location>
</feature>
<name>EX7S_ECO45</name>
<protein>
    <recommendedName>
        <fullName evidence="1">Exodeoxyribonuclease 7 small subunit</fullName>
        <ecNumber evidence="1">3.1.11.6</ecNumber>
    </recommendedName>
    <alternativeName>
        <fullName evidence="1">Exodeoxyribonuclease VII small subunit</fullName>
        <shortName evidence="1">Exonuclease VII small subunit</shortName>
    </alternativeName>
</protein>
<organism>
    <name type="scientific">Escherichia coli O45:K1 (strain S88 / ExPEC)</name>
    <dbReference type="NCBI Taxonomy" id="585035"/>
    <lineage>
        <taxon>Bacteria</taxon>
        <taxon>Pseudomonadati</taxon>
        <taxon>Pseudomonadota</taxon>
        <taxon>Gammaproteobacteria</taxon>
        <taxon>Enterobacterales</taxon>
        <taxon>Enterobacteriaceae</taxon>
        <taxon>Escherichia</taxon>
    </lineage>
</organism>
<proteinExistence type="inferred from homology"/>
<accession>B7MD80</accession>
<comment type="function">
    <text evidence="1">Bidirectionally degrades single-stranded DNA into large acid-insoluble oligonucleotides, which are then degraded further into small acid-soluble oligonucleotides.</text>
</comment>
<comment type="catalytic activity">
    <reaction evidence="1">
        <text>Exonucleolytic cleavage in either 5'- to 3'- or 3'- to 5'-direction to yield nucleoside 5'-phosphates.</text>
        <dbReference type="EC" id="3.1.11.6"/>
    </reaction>
</comment>
<comment type="subunit">
    <text evidence="1">Heterooligomer composed of large and small subunits.</text>
</comment>
<comment type="subcellular location">
    <subcellularLocation>
        <location evidence="1">Cytoplasm</location>
    </subcellularLocation>
</comment>
<comment type="similarity">
    <text evidence="1">Belongs to the XseB family.</text>
</comment>